<comment type="function">
    <text evidence="1">DNA ligase that seals nicks in double-stranded DNA during DNA replication, DNA recombination and DNA repair.</text>
</comment>
<comment type="catalytic activity">
    <reaction evidence="1">
        <text>ATP + (deoxyribonucleotide)n-3'-hydroxyl + 5'-phospho-(deoxyribonucleotide)m = (deoxyribonucleotide)n+m + AMP + diphosphate.</text>
        <dbReference type="EC" id="6.5.1.1"/>
    </reaction>
</comment>
<comment type="cofactor">
    <cofactor evidence="1">
        <name>Mg(2+)</name>
        <dbReference type="ChEBI" id="CHEBI:18420"/>
    </cofactor>
</comment>
<comment type="similarity">
    <text evidence="1">Belongs to the ATP-dependent DNA ligase family.</text>
</comment>
<proteinExistence type="inferred from homology"/>
<name>DNLI_METTH</name>
<feature type="chain" id="PRO_0000059609" description="DNA ligase">
    <location>
        <begin position="1"/>
        <end position="561"/>
    </location>
</feature>
<feature type="active site" description="N6-AMP-lysine intermediate" evidence="1">
    <location>
        <position position="251"/>
    </location>
</feature>
<feature type="binding site" evidence="1">
    <location>
        <position position="249"/>
    </location>
    <ligand>
        <name>ATP</name>
        <dbReference type="ChEBI" id="CHEBI:30616"/>
    </ligand>
</feature>
<feature type="binding site" evidence="1">
    <location>
        <position position="256"/>
    </location>
    <ligand>
        <name>ATP</name>
        <dbReference type="ChEBI" id="CHEBI:30616"/>
    </ligand>
</feature>
<feature type="binding site" evidence="1">
    <location>
        <position position="271"/>
    </location>
    <ligand>
        <name>ATP</name>
        <dbReference type="ChEBI" id="CHEBI:30616"/>
    </ligand>
</feature>
<feature type="binding site" evidence="1">
    <location>
        <position position="301"/>
    </location>
    <ligand>
        <name>ATP</name>
        <dbReference type="ChEBI" id="CHEBI:30616"/>
    </ligand>
</feature>
<feature type="binding site" evidence="1">
    <location>
        <position position="340"/>
    </location>
    <ligand>
        <name>ATP</name>
        <dbReference type="ChEBI" id="CHEBI:30616"/>
    </ligand>
</feature>
<feature type="binding site" evidence="1">
    <location>
        <position position="417"/>
    </location>
    <ligand>
        <name>ATP</name>
        <dbReference type="ChEBI" id="CHEBI:30616"/>
    </ligand>
</feature>
<feature type="binding site" evidence="1">
    <location>
        <position position="423"/>
    </location>
    <ligand>
        <name>ATP</name>
        <dbReference type="ChEBI" id="CHEBI:30616"/>
    </ligand>
</feature>
<protein>
    <recommendedName>
        <fullName evidence="1">DNA ligase</fullName>
        <ecNumber evidence="1">6.5.1.1</ecNumber>
    </recommendedName>
    <alternativeName>
        <fullName evidence="1">Polydeoxyribonucleotide synthase [ATP]</fullName>
    </alternativeName>
</protein>
<reference key="1">
    <citation type="journal article" date="1997" name="J. Bacteriol.">
        <title>Growth- and substrate-dependent transcription of the formate dehydrogenase (fdhCAB) operon in Methanobacterium thermoformicicum Z-245.</title>
        <authorList>
            <person name="Noelling J."/>
            <person name="Reeve J.N."/>
        </authorList>
    </citation>
    <scope>NUCLEOTIDE SEQUENCE [GENOMIC DNA]</scope>
    <source>
        <strain>ATCC 29096 / DSM 1053 / JCM 10044 / NBRC 100330 / Delta H</strain>
    </source>
</reference>
<reference key="2">
    <citation type="journal article" date="1997" name="J. Bacteriol.">
        <title>Complete genome sequence of Methanobacterium thermoautotrophicum deltaH: functional analysis and comparative genomics.</title>
        <authorList>
            <person name="Smith D.R."/>
            <person name="Doucette-Stamm L.A."/>
            <person name="Deloughery C."/>
            <person name="Lee H.-M."/>
            <person name="Dubois J."/>
            <person name="Aldredge T."/>
            <person name="Bashirzadeh R."/>
            <person name="Blakely D."/>
            <person name="Cook R."/>
            <person name="Gilbert K."/>
            <person name="Harrison D."/>
            <person name="Hoang L."/>
            <person name="Keagle P."/>
            <person name="Lumm W."/>
            <person name="Pothier B."/>
            <person name="Qiu D."/>
            <person name="Spadafora R."/>
            <person name="Vicare R."/>
            <person name="Wang Y."/>
            <person name="Wierzbowski J."/>
            <person name="Gibson R."/>
            <person name="Jiwani N."/>
            <person name="Caruso A."/>
            <person name="Bush D."/>
            <person name="Safer H."/>
            <person name="Patwell D."/>
            <person name="Prabhakar S."/>
            <person name="McDougall S."/>
            <person name="Shimer G."/>
            <person name="Goyal A."/>
            <person name="Pietrovski S."/>
            <person name="Church G.M."/>
            <person name="Daniels C.J."/>
            <person name="Mao J.-I."/>
            <person name="Rice P."/>
            <person name="Noelling J."/>
            <person name="Reeve J.N."/>
        </authorList>
    </citation>
    <scope>NUCLEOTIDE SEQUENCE [LARGE SCALE GENOMIC DNA]</scope>
    <source>
        <strain>ATCC 29096 / DSM 1053 / JCM 10044 / NBRC 100330 / Delta H</strain>
    </source>
</reference>
<dbReference type="EC" id="6.5.1.1" evidence="1"/>
<dbReference type="EMBL" id="U51624">
    <property type="protein sequence ID" value="AAC44812.1"/>
    <property type="molecule type" value="Genomic_DNA"/>
</dbReference>
<dbReference type="EMBL" id="AE000666">
    <property type="protein sequence ID" value="AAB86053.1"/>
    <property type="molecule type" value="Genomic_DNA"/>
</dbReference>
<dbReference type="PIR" id="H69077">
    <property type="entry name" value="H69077"/>
</dbReference>
<dbReference type="SMR" id="Q50566"/>
<dbReference type="FunCoup" id="Q50566">
    <property type="interactions" value="144"/>
</dbReference>
<dbReference type="STRING" id="187420.MTH_1580"/>
<dbReference type="PaxDb" id="187420-MTH_1580"/>
<dbReference type="EnsemblBacteria" id="AAB86053">
    <property type="protein sequence ID" value="AAB86053"/>
    <property type="gene ID" value="MTH_1580"/>
</dbReference>
<dbReference type="KEGG" id="mth:MTH_1580"/>
<dbReference type="PATRIC" id="fig|187420.15.peg.1543"/>
<dbReference type="HOGENOM" id="CLU_005138_6_0_2"/>
<dbReference type="InParanoid" id="Q50566"/>
<dbReference type="BRENDA" id="6.5.1.1">
    <property type="organism ID" value="3256"/>
</dbReference>
<dbReference type="Proteomes" id="UP000005223">
    <property type="component" value="Chromosome"/>
</dbReference>
<dbReference type="GO" id="GO:0005524">
    <property type="term" value="F:ATP binding"/>
    <property type="evidence" value="ECO:0007669"/>
    <property type="project" value="UniProtKB-UniRule"/>
</dbReference>
<dbReference type="GO" id="GO:0003677">
    <property type="term" value="F:DNA binding"/>
    <property type="evidence" value="ECO:0007669"/>
    <property type="project" value="InterPro"/>
</dbReference>
<dbReference type="GO" id="GO:0003910">
    <property type="term" value="F:DNA ligase (ATP) activity"/>
    <property type="evidence" value="ECO:0007669"/>
    <property type="project" value="UniProtKB-UniRule"/>
</dbReference>
<dbReference type="GO" id="GO:0046872">
    <property type="term" value="F:metal ion binding"/>
    <property type="evidence" value="ECO:0007669"/>
    <property type="project" value="UniProtKB-KW"/>
</dbReference>
<dbReference type="GO" id="GO:0051301">
    <property type="term" value="P:cell division"/>
    <property type="evidence" value="ECO:0007669"/>
    <property type="project" value="UniProtKB-KW"/>
</dbReference>
<dbReference type="GO" id="GO:0071897">
    <property type="term" value="P:DNA biosynthetic process"/>
    <property type="evidence" value="ECO:0007669"/>
    <property type="project" value="InterPro"/>
</dbReference>
<dbReference type="GO" id="GO:0006310">
    <property type="term" value="P:DNA recombination"/>
    <property type="evidence" value="ECO:0007669"/>
    <property type="project" value="UniProtKB-UniRule"/>
</dbReference>
<dbReference type="GO" id="GO:0006281">
    <property type="term" value="P:DNA repair"/>
    <property type="evidence" value="ECO:0007669"/>
    <property type="project" value="UniProtKB-UniRule"/>
</dbReference>
<dbReference type="GO" id="GO:0006273">
    <property type="term" value="P:lagging strand elongation"/>
    <property type="evidence" value="ECO:0007669"/>
    <property type="project" value="TreeGrafter"/>
</dbReference>
<dbReference type="CDD" id="cd07901">
    <property type="entry name" value="Adenylation_DNA_ligase_Arch_LigB"/>
    <property type="match status" value="1"/>
</dbReference>
<dbReference type="CDD" id="cd07972">
    <property type="entry name" value="OBF_DNA_ligase_Arch_LigB"/>
    <property type="match status" value="1"/>
</dbReference>
<dbReference type="FunFam" id="1.10.3260.10:FF:000007">
    <property type="entry name" value="DNA ligase"/>
    <property type="match status" value="1"/>
</dbReference>
<dbReference type="Gene3D" id="1.10.3260.10">
    <property type="entry name" value="DNA ligase, ATP-dependent, N-terminal domain"/>
    <property type="match status" value="1"/>
</dbReference>
<dbReference type="Gene3D" id="3.30.470.30">
    <property type="entry name" value="DNA ligase/mRNA capping enzyme"/>
    <property type="match status" value="1"/>
</dbReference>
<dbReference type="Gene3D" id="2.40.50.140">
    <property type="entry name" value="Nucleic acid-binding proteins"/>
    <property type="match status" value="1"/>
</dbReference>
<dbReference type="HAMAP" id="MF_00407">
    <property type="entry name" value="DNA_ligase"/>
    <property type="match status" value="1"/>
</dbReference>
<dbReference type="InterPro" id="IPR050191">
    <property type="entry name" value="ATP-dep_DNA_ligase"/>
</dbReference>
<dbReference type="InterPro" id="IPR022865">
    <property type="entry name" value="DNA_ligae_ATP-dep_bac/arc"/>
</dbReference>
<dbReference type="InterPro" id="IPR000977">
    <property type="entry name" value="DNA_ligase_ATP-dep"/>
</dbReference>
<dbReference type="InterPro" id="IPR012309">
    <property type="entry name" value="DNA_ligase_ATP-dep_C"/>
</dbReference>
<dbReference type="InterPro" id="IPR012310">
    <property type="entry name" value="DNA_ligase_ATP-dep_cent"/>
</dbReference>
<dbReference type="InterPro" id="IPR016059">
    <property type="entry name" value="DNA_ligase_ATP-dep_CS"/>
</dbReference>
<dbReference type="InterPro" id="IPR012308">
    <property type="entry name" value="DNA_ligase_ATP-dep_N"/>
</dbReference>
<dbReference type="InterPro" id="IPR036599">
    <property type="entry name" value="DNA_ligase_N_sf"/>
</dbReference>
<dbReference type="InterPro" id="IPR012340">
    <property type="entry name" value="NA-bd_OB-fold"/>
</dbReference>
<dbReference type="NCBIfam" id="TIGR00574">
    <property type="entry name" value="dnl1"/>
    <property type="match status" value="1"/>
</dbReference>
<dbReference type="PANTHER" id="PTHR45674:SF7">
    <property type="entry name" value="DNA LIGASE"/>
    <property type="match status" value="1"/>
</dbReference>
<dbReference type="PANTHER" id="PTHR45674">
    <property type="entry name" value="DNA LIGASE 1/3 FAMILY MEMBER"/>
    <property type="match status" value="1"/>
</dbReference>
<dbReference type="Pfam" id="PF04679">
    <property type="entry name" value="DNA_ligase_A_C"/>
    <property type="match status" value="1"/>
</dbReference>
<dbReference type="Pfam" id="PF01068">
    <property type="entry name" value="DNA_ligase_A_M"/>
    <property type="match status" value="1"/>
</dbReference>
<dbReference type="Pfam" id="PF04675">
    <property type="entry name" value="DNA_ligase_A_N"/>
    <property type="match status" value="1"/>
</dbReference>
<dbReference type="SUPFAM" id="SSF117018">
    <property type="entry name" value="ATP-dependent DNA ligase DNA-binding domain"/>
    <property type="match status" value="1"/>
</dbReference>
<dbReference type="SUPFAM" id="SSF56091">
    <property type="entry name" value="DNA ligase/mRNA capping enzyme, catalytic domain"/>
    <property type="match status" value="1"/>
</dbReference>
<dbReference type="SUPFAM" id="SSF50249">
    <property type="entry name" value="Nucleic acid-binding proteins"/>
    <property type="match status" value="1"/>
</dbReference>
<dbReference type="PROSITE" id="PS00697">
    <property type="entry name" value="DNA_LIGASE_A1"/>
    <property type="match status" value="1"/>
</dbReference>
<dbReference type="PROSITE" id="PS00333">
    <property type="entry name" value="DNA_LIGASE_A2"/>
    <property type="match status" value="1"/>
</dbReference>
<dbReference type="PROSITE" id="PS50160">
    <property type="entry name" value="DNA_LIGASE_A3"/>
    <property type="match status" value="1"/>
</dbReference>
<evidence type="ECO:0000255" key="1">
    <source>
        <dbReference type="HAMAP-Rule" id="MF_00407"/>
    </source>
</evidence>
<accession>Q50566</accession>
<keyword id="KW-0067">ATP-binding</keyword>
<keyword id="KW-0131">Cell cycle</keyword>
<keyword id="KW-0132">Cell division</keyword>
<keyword id="KW-0227">DNA damage</keyword>
<keyword id="KW-0233">DNA recombination</keyword>
<keyword id="KW-0234">DNA repair</keyword>
<keyword id="KW-0235">DNA replication</keyword>
<keyword id="KW-0436">Ligase</keyword>
<keyword id="KW-0460">Magnesium</keyword>
<keyword id="KW-0479">Metal-binding</keyword>
<keyword id="KW-0547">Nucleotide-binding</keyword>
<keyword id="KW-1185">Reference proteome</keyword>
<gene>
    <name evidence="1" type="primary">lig</name>
    <name type="ordered locus">MTH_1580</name>
</gene>
<organism>
    <name type="scientific">Methanothermobacter thermautotrophicus (strain ATCC 29096 / DSM 1053 / JCM 10044 / NBRC 100330 / Delta H)</name>
    <name type="common">Methanobacterium thermoautotrophicum</name>
    <dbReference type="NCBI Taxonomy" id="187420"/>
    <lineage>
        <taxon>Archaea</taxon>
        <taxon>Methanobacteriati</taxon>
        <taxon>Methanobacteriota</taxon>
        <taxon>Methanomada group</taxon>
        <taxon>Methanobacteria</taxon>
        <taxon>Methanobacteriales</taxon>
        <taxon>Methanobacteriaceae</taxon>
        <taxon>Methanothermobacter</taxon>
    </lineage>
</organism>
<sequence length="561" mass="63089">MKELLYMELAEVYHRLESTTKRLEKTEILAELLRSVDKELLPDVTILMLGRVFPIWSEEELGVGIKLLMKAISLVVGVSMDEIEDEIREQGDIGLASEKLFSRKTQTTFFSQPLTVEFVYSRLKALASASGDRAQSKKINILVEVLSQAKPLEARYITRTVLEELRVGVAEGIIRDAIARAFEVDPALVERAHMLTNDLGMVAAVAREEGEPGLGRLNLEPGRPVKPMLAQLASSIESAITELGRAFCETKYDGIRVQIHRCGDEISIFTRRLENITAAVPEILEGVEEALPADDYIVEGEIIVTMDGRPASFQYILQRVRRKYDVERLTREVPLSLFLFDVLYHREPLIDEPLRHRREVLESILSEIPGRVEASRMVDVGPDNLNDALWLFEESIREGHEGIMIKDTEAPYIPGIRGKKMLKFKAEPETLDLIVVGGTYGRGKRAHLVGSYLLAARDEDSGDLVTVAHVATGLDDETLQQLSERMEKLAIERKGRKLLVRPEIILEVAYSEIVKSPEYESGYSLRFPVVKRIRDDLCLDDVDTVGRIESLFQSGQPDQPG</sequence>